<evidence type="ECO:0000255" key="1">
    <source>
        <dbReference type="HAMAP-Rule" id="MF_01220"/>
    </source>
</evidence>
<accession>P65940</accession>
<accession>P59007</accession>
<accession>Q9A151</accession>
<gene>
    <name evidence="1" type="primary">pyrH</name>
    <name type="ordered locus">spyM18_0505</name>
</gene>
<feature type="chain" id="PRO_0000143897" description="Uridylate kinase">
    <location>
        <begin position="1"/>
        <end position="242"/>
    </location>
</feature>
<feature type="region of interest" description="Involved in allosteric activation by GTP" evidence="1">
    <location>
        <begin position="19"/>
        <end position="24"/>
    </location>
</feature>
<feature type="binding site" evidence="1">
    <location>
        <begin position="11"/>
        <end position="14"/>
    </location>
    <ligand>
        <name>ATP</name>
        <dbReference type="ChEBI" id="CHEBI:30616"/>
    </ligand>
</feature>
<feature type="binding site" evidence="1">
    <location>
        <position position="53"/>
    </location>
    <ligand>
        <name>UMP</name>
        <dbReference type="ChEBI" id="CHEBI:57865"/>
    </ligand>
</feature>
<feature type="binding site" evidence="1">
    <location>
        <position position="54"/>
    </location>
    <ligand>
        <name>ATP</name>
        <dbReference type="ChEBI" id="CHEBI:30616"/>
    </ligand>
</feature>
<feature type="binding site" evidence="1">
    <location>
        <position position="58"/>
    </location>
    <ligand>
        <name>ATP</name>
        <dbReference type="ChEBI" id="CHEBI:30616"/>
    </ligand>
</feature>
<feature type="binding site" evidence="1">
    <location>
        <position position="73"/>
    </location>
    <ligand>
        <name>UMP</name>
        <dbReference type="ChEBI" id="CHEBI:57865"/>
    </ligand>
</feature>
<feature type="binding site" evidence="1">
    <location>
        <begin position="134"/>
        <end position="141"/>
    </location>
    <ligand>
        <name>UMP</name>
        <dbReference type="ChEBI" id="CHEBI:57865"/>
    </ligand>
</feature>
<feature type="binding site" evidence="1">
    <location>
        <position position="162"/>
    </location>
    <ligand>
        <name>ATP</name>
        <dbReference type="ChEBI" id="CHEBI:30616"/>
    </ligand>
</feature>
<feature type="binding site" evidence="1">
    <location>
        <position position="168"/>
    </location>
    <ligand>
        <name>ATP</name>
        <dbReference type="ChEBI" id="CHEBI:30616"/>
    </ligand>
</feature>
<feature type="binding site" evidence="1">
    <location>
        <position position="171"/>
    </location>
    <ligand>
        <name>ATP</name>
        <dbReference type="ChEBI" id="CHEBI:30616"/>
    </ligand>
</feature>
<proteinExistence type="inferred from homology"/>
<name>PYRH_STRP8</name>
<keyword id="KW-0021">Allosteric enzyme</keyword>
<keyword id="KW-0067">ATP-binding</keyword>
<keyword id="KW-0963">Cytoplasm</keyword>
<keyword id="KW-0418">Kinase</keyword>
<keyword id="KW-0547">Nucleotide-binding</keyword>
<keyword id="KW-0665">Pyrimidine biosynthesis</keyword>
<keyword id="KW-0808">Transferase</keyword>
<comment type="function">
    <text evidence="1">Catalyzes the reversible phosphorylation of UMP to UDP.</text>
</comment>
<comment type="catalytic activity">
    <reaction evidence="1">
        <text>UMP + ATP = UDP + ADP</text>
        <dbReference type="Rhea" id="RHEA:24400"/>
        <dbReference type="ChEBI" id="CHEBI:30616"/>
        <dbReference type="ChEBI" id="CHEBI:57865"/>
        <dbReference type="ChEBI" id="CHEBI:58223"/>
        <dbReference type="ChEBI" id="CHEBI:456216"/>
        <dbReference type="EC" id="2.7.4.22"/>
    </reaction>
</comment>
<comment type="activity regulation">
    <text evidence="1">Allosterically activated by GTP. Inhibited by UTP.</text>
</comment>
<comment type="pathway">
    <text evidence="1">Pyrimidine metabolism; CTP biosynthesis via de novo pathway; UDP from UMP (UMPK route): step 1/1.</text>
</comment>
<comment type="subunit">
    <text evidence="1">Homohexamer.</text>
</comment>
<comment type="subcellular location">
    <subcellularLocation>
        <location evidence="1">Cytoplasm</location>
    </subcellularLocation>
</comment>
<comment type="similarity">
    <text evidence="1">Belongs to the UMP kinase family.</text>
</comment>
<reference key="1">
    <citation type="journal article" date="2002" name="Proc. Natl. Acad. Sci. U.S.A.">
        <title>Genome sequence and comparative microarray analysis of serotype M18 group A Streptococcus strains associated with acute rheumatic fever outbreaks.</title>
        <authorList>
            <person name="Smoot J.C."/>
            <person name="Barbian K.D."/>
            <person name="Van Gompel J.J."/>
            <person name="Smoot L.M."/>
            <person name="Chaussee M.S."/>
            <person name="Sylva G.L."/>
            <person name="Sturdevant D.E."/>
            <person name="Ricklefs S.M."/>
            <person name="Porcella S.F."/>
            <person name="Parkins L.D."/>
            <person name="Beres S.B."/>
            <person name="Campbell D.S."/>
            <person name="Smith T.M."/>
            <person name="Zhang Q."/>
            <person name="Kapur V."/>
            <person name="Daly J.A."/>
            <person name="Veasy L.G."/>
            <person name="Musser J.M."/>
        </authorList>
    </citation>
    <scope>NUCLEOTIDE SEQUENCE [LARGE SCALE GENOMIC DNA]</scope>
    <source>
        <strain>MGAS8232</strain>
    </source>
</reference>
<protein>
    <recommendedName>
        <fullName evidence="1">Uridylate kinase</fullName>
        <shortName evidence="1">UK</shortName>
        <ecNumber evidence="1">2.7.4.22</ecNumber>
    </recommendedName>
    <alternativeName>
        <fullName evidence="1">Uridine monophosphate kinase</fullName>
        <shortName evidence="1">UMP kinase</shortName>
        <shortName evidence="1">UMPK</shortName>
    </alternativeName>
</protein>
<organism>
    <name type="scientific">Streptococcus pyogenes serotype M18 (strain MGAS8232)</name>
    <dbReference type="NCBI Taxonomy" id="186103"/>
    <lineage>
        <taxon>Bacteria</taxon>
        <taxon>Bacillati</taxon>
        <taxon>Bacillota</taxon>
        <taxon>Bacilli</taxon>
        <taxon>Lactobacillales</taxon>
        <taxon>Streptococcaceae</taxon>
        <taxon>Streptococcus</taxon>
    </lineage>
</organism>
<dbReference type="EC" id="2.7.4.22" evidence="1"/>
<dbReference type="EMBL" id="AE009949">
    <property type="protein sequence ID" value="AAL97223.1"/>
    <property type="molecule type" value="Genomic_DNA"/>
</dbReference>
<dbReference type="RefSeq" id="WP_002985765.1">
    <property type="nucleotide sequence ID" value="NC_003485.1"/>
</dbReference>
<dbReference type="SMR" id="P65940"/>
<dbReference type="GeneID" id="69901300"/>
<dbReference type="KEGG" id="spm:spyM18_0505"/>
<dbReference type="HOGENOM" id="CLU_033861_0_0_9"/>
<dbReference type="UniPathway" id="UPA00159">
    <property type="reaction ID" value="UER00275"/>
</dbReference>
<dbReference type="GO" id="GO:0005737">
    <property type="term" value="C:cytoplasm"/>
    <property type="evidence" value="ECO:0007669"/>
    <property type="project" value="UniProtKB-SubCell"/>
</dbReference>
<dbReference type="GO" id="GO:0005524">
    <property type="term" value="F:ATP binding"/>
    <property type="evidence" value="ECO:0007669"/>
    <property type="project" value="UniProtKB-KW"/>
</dbReference>
<dbReference type="GO" id="GO:0033862">
    <property type="term" value="F:UMP kinase activity"/>
    <property type="evidence" value="ECO:0007669"/>
    <property type="project" value="UniProtKB-EC"/>
</dbReference>
<dbReference type="GO" id="GO:0044210">
    <property type="term" value="P:'de novo' CTP biosynthetic process"/>
    <property type="evidence" value="ECO:0007669"/>
    <property type="project" value="UniProtKB-UniRule"/>
</dbReference>
<dbReference type="GO" id="GO:0006225">
    <property type="term" value="P:UDP biosynthetic process"/>
    <property type="evidence" value="ECO:0007669"/>
    <property type="project" value="TreeGrafter"/>
</dbReference>
<dbReference type="CDD" id="cd04254">
    <property type="entry name" value="AAK_UMPK-PyrH-Ec"/>
    <property type="match status" value="1"/>
</dbReference>
<dbReference type="FunFam" id="3.40.1160.10:FF:000019">
    <property type="entry name" value="Uridylate kinase"/>
    <property type="match status" value="1"/>
</dbReference>
<dbReference type="Gene3D" id="3.40.1160.10">
    <property type="entry name" value="Acetylglutamate kinase-like"/>
    <property type="match status" value="1"/>
</dbReference>
<dbReference type="HAMAP" id="MF_01220_B">
    <property type="entry name" value="PyrH_B"/>
    <property type="match status" value="1"/>
</dbReference>
<dbReference type="InterPro" id="IPR036393">
    <property type="entry name" value="AceGlu_kinase-like_sf"/>
</dbReference>
<dbReference type="InterPro" id="IPR001048">
    <property type="entry name" value="Asp/Glu/Uridylate_kinase"/>
</dbReference>
<dbReference type="InterPro" id="IPR011817">
    <property type="entry name" value="Uridylate_kinase"/>
</dbReference>
<dbReference type="InterPro" id="IPR015963">
    <property type="entry name" value="Uridylate_kinase_bac"/>
</dbReference>
<dbReference type="NCBIfam" id="TIGR02075">
    <property type="entry name" value="pyrH_bact"/>
    <property type="match status" value="1"/>
</dbReference>
<dbReference type="PANTHER" id="PTHR42833">
    <property type="entry name" value="URIDYLATE KINASE"/>
    <property type="match status" value="1"/>
</dbReference>
<dbReference type="PANTHER" id="PTHR42833:SF4">
    <property type="entry name" value="URIDYLATE KINASE PUMPKIN, CHLOROPLASTIC"/>
    <property type="match status" value="1"/>
</dbReference>
<dbReference type="Pfam" id="PF00696">
    <property type="entry name" value="AA_kinase"/>
    <property type="match status" value="1"/>
</dbReference>
<dbReference type="PIRSF" id="PIRSF005650">
    <property type="entry name" value="Uridylate_kin"/>
    <property type="match status" value="1"/>
</dbReference>
<dbReference type="SUPFAM" id="SSF53633">
    <property type="entry name" value="Carbamate kinase-like"/>
    <property type="match status" value="1"/>
</dbReference>
<sequence>MEPKYQRILIKLSGEALAGEKGVGIDIPTVQAIAKEIAEVHVSGVQIALVIGGGNLWRGEPAADAGMDRVQADYTGMLGTVMNALVMADSLQHYGVDTRVQTAIPMQNVAEPYIRGRALRHLEKNRIVVFGAGIGSPYFSTDTTAALRAAEIEADAILMAKNGVDGVYNADPKKDANAVKFDELTHGEVIKRGLKIMDATASTLSMDNDIDLVVFNMNEAGNIQRVVFGEHIGTTVSNKVCD</sequence>